<organism>
    <name type="scientific">Hamiltonella defensa subsp. Acyrthosiphon pisum (strain 5AT)</name>
    <dbReference type="NCBI Taxonomy" id="572265"/>
    <lineage>
        <taxon>Bacteria</taxon>
        <taxon>Pseudomonadati</taxon>
        <taxon>Pseudomonadota</taxon>
        <taxon>Gammaproteobacteria</taxon>
        <taxon>Enterobacterales</taxon>
        <taxon>Enterobacteriaceae</taxon>
        <taxon>aphid secondary symbionts</taxon>
        <taxon>Candidatus Hamiltonella</taxon>
    </lineage>
</organism>
<gene>
    <name evidence="1" type="primary">hemH</name>
    <name type="ordered locus">HDEF_0207</name>
</gene>
<accession>C4K332</accession>
<name>HEMH_HAMD5</name>
<feature type="chain" id="PRO_1000205155" description="Ferrochelatase">
    <location>
        <begin position="1"/>
        <end position="319"/>
    </location>
</feature>
<feature type="binding site" evidence="1">
    <location>
        <position position="194"/>
    </location>
    <ligand>
        <name>Fe cation</name>
        <dbReference type="ChEBI" id="CHEBI:24875"/>
    </ligand>
</feature>
<feature type="binding site" evidence="1">
    <location>
        <position position="275"/>
    </location>
    <ligand>
        <name>Fe cation</name>
        <dbReference type="ChEBI" id="CHEBI:24875"/>
    </ligand>
</feature>
<proteinExistence type="inferred from homology"/>
<comment type="function">
    <text evidence="1">Catalyzes the ferrous insertion into protoporphyrin IX.</text>
</comment>
<comment type="catalytic activity">
    <reaction evidence="1">
        <text>heme b + 2 H(+) = protoporphyrin IX + Fe(2+)</text>
        <dbReference type="Rhea" id="RHEA:22584"/>
        <dbReference type="ChEBI" id="CHEBI:15378"/>
        <dbReference type="ChEBI" id="CHEBI:29033"/>
        <dbReference type="ChEBI" id="CHEBI:57306"/>
        <dbReference type="ChEBI" id="CHEBI:60344"/>
        <dbReference type="EC" id="4.98.1.1"/>
    </reaction>
</comment>
<comment type="pathway">
    <text evidence="1">Porphyrin-containing compound metabolism; protoheme biosynthesis; protoheme from protoporphyrin-IX: step 1/1.</text>
</comment>
<comment type="subcellular location">
    <subcellularLocation>
        <location evidence="1">Cytoplasm</location>
    </subcellularLocation>
</comment>
<comment type="similarity">
    <text evidence="1">Belongs to the ferrochelatase family.</text>
</comment>
<evidence type="ECO:0000255" key="1">
    <source>
        <dbReference type="HAMAP-Rule" id="MF_00323"/>
    </source>
</evidence>
<reference key="1">
    <citation type="journal article" date="2009" name="Proc. Natl. Acad. Sci. U.S.A.">
        <title>Hamiltonella defensa, genome evolution of protective bacterial endosymbiont from pathogenic ancestors.</title>
        <authorList>
            <person name="Degnan P.H."/>
            <person name="Yu Y."/>
            <person name="Sisneros N."/>
            <person name="Wing R.A."/>
            <person name="Moran N.A."/>
        </authorList>
    </citation>
    <scope>NUCLEOTIDE SEQUENCE [LARGE SCALE GENOMIC DNA]</scope>
    <source>
        <strain>5AT</strain>
    </source>
</reference>
<dbReference type="EC" id="4.98.1.1" evidence="1"/>
<dbReference type="EMBL" id="CP001277">
    <property type="protein sequence ID" value="ACQ66975.1"/>
    <property type="molecule type" value="Genomic_DNA"/>
</dbReference>
<dbReference type="RefSeq" id="WP_012737940.1">
    <property type="nucleotide sequence ID" value="NC_012751.1"/>
</dbReference>
<dbReference type="SMR" id="C4K332"/>
<dbReference type="STRING" id="572265.HDEF_0207"/>
<dbReference type="GeneID" id="66260135"/>
<dbReference type="KEGG" id="hde:HDEF_0207"/>
<dbReference type="eggNOG" id="COG0276">
    <property type="taxonomic scope" value="Bacteria"/>
</dbReference>
<dbReference type="HOGENOM" id="CLU_018884_0_0_6"/>
<dbReference type="UniPathway" id="UPA00252">
    <property type="reaction ID" value="UER00325"/>
</dbReference>
<dbReference type="Proteomes" id="UP000002334">
    <property type="component" value="Chromosome"/>
</dbReference>
<dbReference type="GO" id="GO:0005737">
    <property type="term" value="C:cytoplasm"/>
    <property type="evidence" value="ECO:0007669"/>
    <property type="project" value="UniProtKB-SubCell"/>
</dbReference>
<dbReference type="GO" id="GO:0004325">
    <property type="term" value="F:ferrochelatase activity"/>
    <property type="evidence" value="ECO:0007669"/>
    <property type="project" value="UniProtKB-UniRule"/>
</dbReference>
<dbReference type="GO" id="GO:0046872">
    <property type="term" value="F:metal ion binding"/>
    <property type="evidence" value="ECO:0007669"/>
    <property type="project" value="UniProtKB-KW"/>
</dbReference>
<dbReference type="GO" id="GO:0006783">
    <property type="term" value="P:heme biosynthetic process"/>
    <property type="evidence" value="ECO:0007669"/>
    <property type="project" value="UniProtKB-UniRule"/>
</dbReference>
<dbReference type="CDD" id="cd00419">
    <property type="entry name" value="Ferrochelatase_C"/>
    <property type="match status" value="1"/>
</dbReference>
<dbReference type="CDD" id="cd03411">
    <property type="entry name" value="Ferrochelatase_N"/>
    <property type="match status" value="1"/>
</dbReference>
<dbReference type="FunFam" id="3.40.50.1400:FF:000002">
    <property type="entry name" value="Ferrochelatase"/>
    <property type="match status" value="1"/>
</dbReference>
<dbReference type="Gene3D" id="3.40.50.1400">
    <property type="match status" value="2"/>
</dbReference>
<dbReference type="HAMAP" id="MF_00323">
    <property type="entry name" value="Ferrochelatase"/>
    <property type="match status" value="1"/>
</dbReference>
<dbReference type="InterPro" id="IPR001015">
    <property type="entry name" value="Ferrochelatase"/>
</dbReference>
<dbReference type="InterPro" id="IPR019772">
    <property type="entry name" value="Ferrochelatase_AS"/>
</dbReference>
<dbReference type="InterPro" id="IPR033644">
    <property type="entry name" value="Ferrochelatase_C"/>
</dbReference>
<dbReference type="InterPro" id="IPR033659">
    <property type="entry name" value="Ferrochelatase_N"/>
</dbReference>
<dbReference type="NCBIfam" id="TIGR00109">
    <property type="entry name" value="hemH"/>
    <property type="match status" value="1"/>
</dbReference>
<dbReference type="PANTHER" id="PTHR11108">
    <property type="entry name" value="FERROCHELATASE"/>
    <property type="match status" value="1"/>
</dbReference>
<dbReference type="PANTHER" id="PTHR11108:SF1">
    <property type="entry name" value="FERROCHELATASE, MITOCHONDRIAL"/>
    <property type="match status" value="1"/>
</dbReference>
<dbReference type="Pfam" id="PF00762">
    <property type="entry name" value="Ferrochelatase"/>
    <property type="match status" value="1"/>
</dbReference>
<dbReference type="SUPFAM" id="SSF53800">
    <property type="entry name" value="Chelatase"/>
    <property type="match status" value="1"/>
</dbReference>
<dbReference type="PROSITE" id="PS00534">
    <property type="entry name" value="FERROCHELATASE"/>
    <property type="match status" value="1"/>
</dbReference>
<sequence>MVKSKLGVLLVNLGTPDAPTVPAIKRYLKQFLSDRRVIDTPPILWWPLLRGIVLPFRSRRVAKLYQSIWMPEGSPLLVYSDRQQKALAARLPDASVELAMSYGSPSLGDAINRLITQGIIKLVILPLYPQYSATTCGSVWDAVSGILKKYRSLPSIYFIRDYAQHPSYINALKQSVARYFEKHGQPDKLLLSFHGIPQRYVRLGDDYPKRCEDTYRALSTALGLHNNKIMMTYQSRFGWEPWLTPYTDKTLKSLPAKGIKHIQVLCPGFSADCLETLEEIKEQNKEIFLKAGGKKFEYIPALNDSPEQIDLLEQLVSLG</sequence>
<keyword id="KW-0963">Cytoplasm</keyword>
<keyword id="KW-0350">Heme biosynthesis</keyword>
<keyword id="KW-0408">Iron</keyword>
<keyword id="KW-0456">Lyase</keyword>
<keyword id="KW-0479">Metal-binding</keyword>
<keyword id="KW-0627">Porphyrin biosynthesis</keyword>
<protein>
    <recommendedName>
        <fullName evidence="1">Ferrochelatase</fullName>
        <ecNumber evidence="1">4.98.1.1</ecNumber>
    </recommendedName>
    <alternativeName>
        <fullName evidence="1">Heme synthase</fullName>
    </alternativeName>
    <alternativeName>
        <fullName evidence="1">Protoheme ferro-lyase</fullName>
    </alternativeName>
</protein>